<organism>
    <name type="scientific">Acinetobacter baumannii (strain ACICU)</name>
    <dbReference type="NCBI Taxonomy" id="405416"/>
    <lineage>
        <taxon>Bacteria</taxon>
        <taxon>Pseudomonadati</taxon>
        <taxon>Pseudomonadota</taxon>
        <taxon>Gammaproteobacteria</taxon>
        <taxon>Moraxellales</taxon>
        <taxon>Moraxellaceae</taxon>
        <taxon>Acinetobacter</taxon>
        <taxon>Acinetobacter calcoaceticus/baumannii complex</taxon>
    </lineage>
</organism>
<sequence length="282" mass="31066">MKTETTIQGLAASLNPARAARKIIGFVPTMGNLHEGHLTLVREAKKLCDVVVVSIFVNPTQFGPGEDFDNYPRTLEQDSRLLADVGCDIIFAPSVEQMYGTQPRLTNISVSQITDDLCGSSRPGHFDGVALVVTKLFNIVQPNYAFFGQKDYQQLAVIRQFVQDLNIPLEVIGVPIVRAEDGLALSSRNGYLTPEQRQVAPVIYQGLKQAEEQLHQGKDLQQVLADLKTLLTDNGFVVDYVEARQPNLLAASQFDRDIVLFVAAKLGGTRLIDNLQVAFTPQ</sequence>
<proteinExistence type="inferred from homology"/>
<reference key="1">
    <citation type="journal article" date="2008" name="Antimicrob. Agents Chemother.">
        <title>Whole-genome pyrosequencing of an epidemic multidrug-resistant Acinetobacter baumannii strain belonging to the European clone II group.</title>
        <authorList>
            <person name="Iacono M."/>
            <person name="Villa L."/>
            <person name="Fortini D."/>
            <person name="Bordoni R."/>
            <person name="Imperi F."/>
            <person name="Bonnal R.J."/>
            <person name="Sicheritz-Ponten T."/>
            <person name="De Bellis G."/>
            <person name="Visca P."/>
            <person name="Cassone A."/>
            <person name="Carattoli A."/>
        </authorList>
    </citation>
    <scope>NUCLEOTIDE SEQUENCE [LARGE SCALE GENOMIC DNA]</scope>
    <source>
        <strain>ACICU</strain>
    </source>
</reference>
<accession>B2HTG5</accession>
<dbReference type="EC" id="6.3.2.1" evidence="1"/>
<dbReference type="EMBL" id="CP000863">
    <property type="protein sequence ID" value="ACC55902.1"/>
    <property type="molecule type" value="Genomic_DNA"/>
</dbReference>
<dbReference type="RefSeq" id="WP_000846362.1">
    <property type="nucleotide sequence ID" value="NZ_CP031380.1"/>
</dbReference>
<dbReference type="SMR" id="B2HTG5"/>
<dbReference type="GeneID" id="92892565"/>
<dbReference type="KEGG" id="abc:ACICU_00590"/>
<dbReference type="HOGENOM" id="CLU_047148_0_0_6"/>
<dbReference type="UniPathway" id="UPA00028">
    <property type="reaction ID" value="UER00005"/>
</dbReference>
<dbReference type="Proteomes" id="UP000008839">
    <property type="component" value="Chromosome"/>
</dbReference>
<dbReference type="GO" id="GO:0005829">
    <property type="term" value="C:cytosol"/>
    <property type="evidence" value="ECO:0007669"/>
    <property type="project" value="TreeGrafter"/>
</dbReference>
<dbReference type="GO" id="GO:0005524">
    <property type="term" value="F:ATP binding"/>
    <property type="evidence" value="ECO:0007669"/>
    <property type="project" value="UniProtKB-KW"/>
</dbReference>
<dbReference type="GO" id="GO:0004592">
    <property type="term" value="F:pantoate-beta-alanine ligase activity"/>
    <property type="evidence" value="ECO:0007669"/>
    <property type="project" value="UniProtKB-UniRule"/>
</dbReference>
<dbReference type="GO" id="GO:0015940">
    <property type="term" value="P:pantothenate biosynthetic process"/>
    <property type="evidence" value="ECO:0007669"/>
    <property type="project" value="UniProtKB-UniRule"/>
</dbReference>
<dbReference type="CDD" id="cd00560">
    <property type="entry name" value="PanC"/>
    <property type="match status" value="1"/>
</dbReference>
<dbReference type="FunFam" id="3.40.50.620:FF:000013">
    <property type="entry name" value="Pantothenate synthetase"/>
    <property type="match status" value="1"/>
</dbReference>
<dbReference type="Gene3D" id="3.40.50.620">
    <property type="entry name" value="HUPs"/>
    <property type="match status" value="1"/>
</dbReference>
<dbReference type="Gene3D" id="3.30.1300.10">
    <property type="entry name" value="Pantoate-beta-alanine ligase, C-terminal domain"/>
    <property type="match status" value="1"/>
</dbReference>
<dbReference type="HAMAP" id="MF_00158">
    <property type="entry name" value="PanC"/>
    <property type="match status" value="1"/>
</dbReference>
<dbReference type="InterPro" id="IPR004821">
    <property type="entry name" value="Cyt_trans-like"/>
</dbReference>
<dbReference type="InterPro" id="IPR003721">
    <property type="entry name" value="Pantoate_ligase"/>
</dbReference>
<dbReference type="InterPro" id="IPR042176">
    <property type="entry name" value="Pantoate_ligase_C"/>
</dbReference>
<dbReference type="InterPro" id="IPR014729">
    <property type="entry name" value="Rossmann-like_a/b/a_fold"/>
</dbReference>
<dbReference type="NCBIfam" id="TIGR00125">
    <property type="entry name" value="cyt_tran_rel"/>
    <property type="match status" value="1"/>
</dbReference>
<dbReference type="NCBIfam" id="TIGR00018">
    <property type="entry name" value="panC"/>
    <property type="match status" value="1"/>
</dbReference>
<dbReference type="PANTHER" id="PTHR21299">
    <property type="entry name" value="CYTIDYLATE KINASE/PANTOATE-BETA-ALANINE LIGASE"/>
    <property type="match status" value="1"/>
</dbReference>
<dbReference type="PANTHER" id="PTHR21299:SF1">
    <property type="entry name" value="PANTOATE--BETA-ALANINE LIGASE"/>
    <property type="match status" value="1"/>
</dbReference>
<dbReference type="Pfam" id="PF02569">
    <property type="entry name" value="Pantoate_ligase"/>
    <property type="match status" value="1"/>
</dbReference>
<dbReference type="SUPFAM" id="SSF52374">
    <property type="entry name" value="Nucleotidylyl transferase"/>
    <property type="match status" value="1"/>
</dbReference>
<keyword id="KW-0067">ATP-binding</keyword>
<keyword id="KW-0963">Cytoplasm</keyword>
<keyword id="KW-0436">Ligase</keyword>
<keyword id="KW-0547">Nucleotide-binding</keyword>
<keyword id="KW-0566">Pantothenate biosynthesis</keyword>
<evidence type="ECO:0000255" key="1">
    <source>
        <dbReference type="HAMAP-Rule" id="MF_00158"/>
    </source>
</evidence>
<comment type="function">
    <text evidence="1">Catalyzes the condensation of pantoate with beta-alanine in an ATP-dependent reaction via a pantoyl-adenylate intermediate.</text>
</comment>
<comment type="catalytic activity">
    <reaction evidence="1">
        <text>(R)-pantoate + beta-alanine + ATP = (R)-pantothenate + AMP + diphosphate + H(+)</text>
        <dbReference type="Rhea" id="RHEA:10912"/>
        <dbReference type="ChEBI" id="CHEBI:15378"/>
        <dbReference type="ChEBI" id="CHEBI:15980"/>
        <dbReference type="ChEBI" id="CHEBI:29032"/>
        <dbReference type="ChEBI" id="CHEBI:30616"/>
        <dbReference type="ChEBI" id="CHEBI:33019"/>
        <dbReference type="ChEBI" id="CHEBI:57966"/>
        <dbReference type="ChEBI" id="CHEBI:456215"/>
        <dbReference type="EC" id="6.3.2.1"/>
    </reaction>
</comment>
<comment type="pathway">
    <text evidence="1">Cofactor biosynthesis; (R)-pantothenate biosynthesis; (R)-pantothenate from (R)-pantoate and beta-alanine: step 1/1.</text>
</comment>
<comment type="subunit">
    <text evidence="1">Homodimer.</text>
</comment>
<comment type="subcellular location">
    <subcellularLocation>
        <location evidence="1">Cytoplasm</location>
    </subcellularLocation>
</comment>
<comment type="miscellaneous">
    <text evidence="1">The reaction proceeds by a bi uni uni bi ping pong mechanism.</text>
</comment>
<comment type="similarity">
    <text evidence="1">Belongs to the pantothenate synthetase family.</text>
</comment>
<feature type="chain" id="PRO_1000118134" description="Pantothenate synthetase">
    <location>
        <begin position="1"/>
        <end position="282"/>
    </location>
</feature>
<feature type="active site" description="Proton donor" evidence="1">
    <location>
        <position position="37"/>
    </location>
</feature>
<feature type="binding site" evidence="1">
    <location>
        <begin position="30"/>
        <end position="37"/>
    </location>
    <ligand>
        <name>ATP</name>
        <dbReference type="ChEBI" id="CHEBI:30616"/>
    </ligand>
</feature>
<feature type="binding site" evidence="1">
    <location>
        <position position="61"/>
    </location>
    <ligand>
        <name>(R)-pantoate</name>
        <dbReference type="ChEBI" id="CHEBI:15980"/>
    </ligand>
</feature>
<feature type="binding site" evidence="1">
    <location>
        <position position="61"/>
    </location>
    <ligand>
        <name>beta-alanine</name>
        <dbReference type="ChEBI" id="CHEBI:57966"/>
    </ligand>
</feature>
<feature type="binding site" evidence="1">
    <location>
        <begin position="148"/>
        <end position="151"/>
    </location>
    <ligand>
        <name>ATP</name>
        <dbReference type="ChEBI" id="CHEBI:30616"/>
    </ligand>
</feature>
<feature type="binding site" evidence="1">
    <location>
        <position position="154"/>
    </location>
    <ligand>
        <name>(R)-pantoate</name>
        <dbReference type="ChEBI" id="CHEBI:15980"/>
    </ligand>
</feature>
<feature type="binding site" evidence="1">
    <location>
        <position position="177"/>
    </location>
    <ligand>
        <name>ATP</name>
        <dbReference type="ChEBI" id="CHEBI:30616"/>
    </ligand>
</feature>
<feature type="binding site" evidence="1">
    <location>
        <begin position="185"/>
        <end position="188"/>
    </location>
    <ligand>
        <name>ATP</name>
        <dbReference type="ChEBI" id="CHEBI:30616"/>
    </ligand>
</feature>
<name>PANC_ACIBC</name>
<gene>
    <name evidence="1" type="primary">panC</name>
    <name type="ordered locus">ACICU_00590</name>
</gene>
<protein>
    <recommendedName>
        <fullName evidence="1">Pantothenate synthetase</fullName>
        <shortName evidence="1">PS</shortName>
        <ecNumber evidence="1">6.3.2.1</ecNumber>
    </recommendedName>
    <alternativeName>
        <fullName evidence="1">Pantoate--beta-alanine ligase</fullName>
    </alternativeName>
    <alternativeName>
        <fullName evidence="1">Pantoate-activating enzyme</fullName>
    </alternativeName>
</protein>